<feature type="chain" id="PRO_0000423248" description="Peptidyl-prolyl cis-trans isomerase A">
    <location>
        <begin position="1"/>
        <end position="165"/>
    </location>
</feature>
<feature type="initiator methionine" description="Removed; alternate" evidence="2">
    <location>
        <position position="1"/>
    </location>
</feature>
<feature type="chain" id="PRO_0000064118" description="Peptidyl-prolyl cis-trans isomerase A, N-terminally processed">
    <location>
        <begin position="2"/>
        <end position="165"/>
    </location>
</feature>
<feature type="domain" description="PPIase cyclophilin-type" evidence="4">
    <location>
        <begin position="7"/>
        <end position="163"/>
    </location>
</feature>
<feature type="modified residue" description="N-acetylmethionine" evidence="2">
    <location>
        <position position="1"/>
    </location>
</feature>
<feature type="modified residue" description="N-acetylvaline; in Peptidyl-prolyl cis-trans isomerase A, N-terminally processed" evidence="2">
    <location>
        <position position="2"/>
    </location>
</feature>
<feature type="modified residue" description="N6-acetyllysine; alternate" evidence="2">
    <location>
        <position position="28"/>
    </location>
</feature>
<feature type="modified residue" description="N6-acetyllysine" evidence="2">
    <location>
        <position position="44"/>
    </location>
</feature>
<feature type="modified residue" description="N6-acetyllysine" evidence="2">
    <location>
        <position position="76"/>
    </location>
</feature>
<feature type="modified residue" description="Phosphoserine" evidence="2">
    <location>
        <position position="77"/>
    </location>
</feature>
<feature type="modified residue" description="N6-acetyllysine; alternate" evidence="2">
    <location>
        <position position="82"/>
    </location>
</feature>
<feature type="modified residue" description="Phosphothreonine" evidence="2">
    <location>
        <position position="93"/>
    </location>
</feature>
<feature type="modified residue" description="N6-acetyllysine" evidence="2">
    <location>
        <position position="125"/>
    </location>
</feature>
<feature type="modified residue" description="N6-acetyllysine" evidence="2">
    <location>
        <position position="131"/>
    </location>
</feature>
<feature type="modified residue" description="N6-acetyllysine" evidence="1">
    <location>
        <position position="133"/>
    </location>
</feature>
<feature type="glycosylation site" description="N-linked (GlcNAc...) asparagine" evidence="3">
    <location>
        <position position="108"/>
    </location>
</feature>
<feature type="cross-link" description="Glycyl lysine isopeptide (Lys-Gly) (interchain with G-Cter in SUMO2); alternate" evidence="2">
    <location>
        <position position="28"/>
    </location>
</feature>
<feature type="cross-link" description="Glycyl lysine isopeptide (Lys-Gly) (interchain with G-Cter in ubiquitin); alternate" evidence="2">
    <location>
        <position position="28"/>
    </location>
</feature>
<feature type="cross-link" description="Glycyl lysine isopeptide (Lys-Gly) (interchain with G-Cter in SUMO2); alternate" evidence="2">
    <location>
        <position position="82"/>
    </location>
</feature>
<organism>
    <name type="scientific">Papio anubis</name>
    <name type="common">Olive baboon</name>
    <dbReference type="NCBI Taxonomy" id="9555"/>
    <lineage>
        <taxon>Eukaryota</taxon>
        <taxon>Metazoa</taxon>
        <taxon>Chordata</taxon>
        <taxon>Craniata</taxon>
        <taxon>Vertebrata</taxon>
        <taxon>Euteleostomi</taxon>
        <taxon>Mammalia</taxon>
        <taxon>Eutheria</taxon>
        <taxon>Euarchontoglires</taxon>
        <taxon>Primates</taxon>
        <taxon>Haplorrhini</taxon>
        <taxon>Catarrhini</taxon>
        <taxon>Cercopithecidae</taxon>
        <taxon>Cercopithecinae</taxon>
        <taxon>Papio</taxon>
    </lineage>
</organism>
<sequence length="165" mass="18012">MVNPTVFFDIAVDGEPLGRVSFELFADKVPKTAENFRALSTGEKGFGYKGSCFHRIIPGFMCQGGDFTRHNGTGGKSIYGEKFEDENFILKHTGPGILSMANAGPNTNGSQFFICTAKTEWLDGKHVVFGKVKEGMNIVEAMERFGSRNGKTSKKITIADCGQLE</sequence>
<dbReference type="EC" id="5.2.1.8" evidence="2"/>
<dbReference type="EMBL" id="AF023859">
    <property type="protein sequence ID" value="AAB81959.1"/>
    <property type="molecule type" value="mRNA"/>
</dbReference>
<dbReference type="RefSeq" id="XP_003895648.1">
    <property type="nucleotide sequence ID" value="XM_003895599.3"/>
</dbReference>
<dbReference type="RefSeq" id="XP_003896076.1">
    <property type="nucleotide sequence ID" value="XM_003896027.4"/>
</dbReference>
<dbReference type="SMR" id="P62941"/>
<dbReference type="STRING" id="9555.ENSPANP00000024453"/>
<dbReference type="GlyCosmos" id="P62941">
    <property type="glycosylation" value="1 site, No reported glycans"/>
</dbReference>
<dbReference type="Ensembl" id="ENSPANT00000057360.2">
    <property type="protein sequence ID" value="ENSPANP00000024453.1"/>
    <property type="gene ID" value="ENSPANG00000029569.2"/>
</dbReference>
<dbReference type="Ensembl" id="ENSPANT00000061986.1">
    <property type="protein sequence ID" value="ENSPANP00000052647.1"/>
    <property type="gene ID" value="ENSPANG00000048991.1"/>
</dbReference>
<dbReference type="GeneID" id="101004286"/>
<dbReference type="KEGG" id="panu:101004286"/>
<dbReference type="eggNOG" id="KOG0865">
    <property type="taxonomic scope" value="Eukaryota"/>
</dbReference>
<dbReference type="GeneTree" id="ENSGT00950000183087"/>
<dbReference type="HOGENOM" id="CLU_012062_4_3_1"/>
<dbReference type="OMA" id="FTMGNGL"/>
<dbReference type="Proteomes" id="UP000028761">
    <property type="component" value="Chromosome 11"/>
</dbReference>
<dbReference type="Proteomes" id="UP000028761">
    <property type="component" value="Chromosome 4"/>
</dbReference>
<dbReference type="Bgee" id="ENSPANG00000029569">
    <property type="expression patterns" value="Expressed in Ammon's horn and 65 other cell types or tissues"/>
</dbReference>
<dbReference type="GO" id="GO:0005737">
    <property type="term" value="C:cytoplasm"/>
    <property type="evidence" value="ECO:0000250"/>
    <property type="project" value="UniProtKB"/>
</dbReference>
<dbReference type="GO" id="GO:0005829">
    <property type="term" value="C:cytosol"/>
    <property type="evidence" value="ECO:0000250"/>
    <property type="project" value="UniProtKB"/>
</dbReference>
<dbReference type="GO" id="GO:0005576">
    <property type="term" value="C:extracellular region"/>
    <property type="evidence" value="ECO:0000250"/>
    <property type="project" value="UniProtKB"/>
</dbReference>
<dbReference type="GO" id="GO:0005634">
    <property type="term" value="C:nucleus"/>
    <property type="evidence" value="ECO:0000250"/>
    <property type="project" value="UniProtKB"/>
</dbReference>
<dbReference type="GO" id="GO:0016018">
    <property type="term" value="F:cyclosporin A binding"/>
    <property type="evidence" value="ECO:0007669"/>
    <property type="project" value="TreeGrafter"/>
</dbReference>
<dbReference type="GO" id="GO:1904399">
    <property type="term" value="F:heparan sulfate binding"/>
    <property type="evidence" value="ECO:0000250"/>
    <property type="project" value="UniProtKB"/>
</dbReference>
<dbReference type="GO" id="GO:0005178">
    <property type="term" value="F:integrin binding"/>
    <property type="evidence" value="ECO:0000250"/>
    <property type="project" value="UniProtKB"/>
</dbReference>
<dbReference type="GO" id="GO:0003755">
    <property type="term" value="F:peptidyl-prolyl cis-trans isomerase activity"/>
    <property type="evidence" value="ECO:0000250"/>
    <property type="project" value="UniProtKB"/>
</dbReference>
<dbReference type="GO" id="GO:0032148">
    <property type="term" value="P:activation of protein kinase B activity"/>
    <property type="evidence" value="ECO:0000250"/>
    <property type="project" value="UniProtKB"/>
</dbReference>
<dbReference type="GO" id="GO:0006915">
    <property type="term" value="P:apoptotic process"/>
    <property type="evidence" value="ECO:0000250"/>
    <property type="project" value="UniProtKB"/>
</dbReference>
<dbReference type="GO" id="GO:0060352">
    <property type="term" value="P:cell adhesion molecule production"/>
    <property type="evidence" value="ECO:0000250"/>
    <property type="project" value="UniProtKB"/>
</dbReference>
<dbReference type="GO" id="GO:0034599">
    <property type="term" value="P:cellular response to oxidative stress"/>
    <property type="evidence" value="ECO:0000250"/>
    <property type="project" value="UniProtKB"/>
</dbReference>
<dbReference type="GO" id="GO:0042118">
    <property type="term" value="P:endothelial cell activation"/>
    <property type="evidence" value="ECO:0000250"/>
    <property type="project" value="UniProtKB"/>
</dbReference>
<dbReference type="GO" id="GO:0030595">
    <property type="term" value="P:leukocyte chemotaxis"/>
    <property type="evidence" value="ECO:0000250"/>
    <property type="project" value="UniProtKB"/>
</dbReference>
<dbReference type="GO" id="GO:1902176">
    <property type="term" value="P:negative regulation of oxidative stress-induced intrinsic apoptotic signaling pathway"/>
    <property type="evidence" value="ECO:0000250"/>
    <property type="project" value="UniProtKB"/>
</dbReference>
<dbReference type="GO" id="GO:0061944">
    <property type="term" value="P:negative regulation of protein K48-linked ubiquitination"/>
    <property type="evidence" value="ECO:0000250"/>
    <property type="project" value="UniProtKB"/>
</dbReference>
<dbReference type="GO" id="GO:0006469">
    <property type="term" value="P:negative regulation of protein kinase activity"/>
    <property type="evidence" value="ECO:0000250"/>
    <property type="project" value="UniProtKB"/>
</dbReference>
<dbReference type="GO" id="GO:0001933">
    <property type="term" value="P:negative regulation of protein phosphorylation"/>
    <property type="evidence" value="ECO:0000250"/>
    <property type="project" value="UniProtKB"/>
</dbReference>
<dbReference type="GO" id="GO:0032873">
    <property type="term" value="P:negative regulation of stress-activated MAPK cascade"/>
    <property type="evidence" value="ECO:0000250"/>
    <property type="project" value="UniProtKB"/>
</dbReference>
<dbReference type="GO" id="GO:0030593">
    <property type="term" value="P:neutrophil chemotaxis"/>
    <property type="evidence" value="ECO:0000250"/>
    <property type="project" value="UniProtKB"/>
</dbReference>
<dbReference type="GO" id="GO:0030168">
    <property type="term" value="P:platelet activation"/>
    <property type="evidence" value="ECO:0000250"/>
    <property type="project" value="UniProtKB"/>
</dbReference>
<dbReference type="GO" id="GO:0070527">
    <property type="term" value="P:platelet aggregation"/>
    <property type="evidence" value="ECO:0000250"/>
    <property type="project" value="UniProtKB"/>
</dbReference>
<dbReference type="GO" id="GO:0043410">
    <property type="term" value="P:positive regulation of MAPK cascade"/>
    <property type="evidence" value="ECO:0000250"/>
    <property type="project" value="UniProtKB"/>
</dbReference>
<dbReference type="GO" id="GO:0051092">
    <property type="term" value="P:positive regulation of NF-kappaB transcription factor activity"/>
    <property type="evidence" value="ECO:0000250"/>
    <property type="project" value="UniProtKB"/>
</dbReference>
<dbReference type="GO" id="GO:0001934">
    <property type="term" value="P:positive regulation of protein phosphorylation"/>
    <property type="evidence" value="ECO:0000250"/>
    <property type="project" value="UniProtKB"/>
</dbReference>
<dbReference type="GO" id="GO:0006457">
    <property type="term" value="P:protein folding"/>
    <property type="evidence" value="ECO:0007669"/>
    <property type="project" value="InterPro"/>
</dbReference>
<dbReference type="GO" id="GO:0000413">
    <property type="term" value="P:protein peptidyl-prolyl isomerization"/>
    <property type="evidence" value="ECO:0000250"/>
    <property type="project" value="UniProtKB"/>
</dbReference>
<dbReference type="GO" id="GO:2001233">
    <property type="term" value="P:regulation of apoptotic signaling pathway"/>
    <property type="evidence" value="ECO:0000250"/>
    <property type="project" value="UniProtKB"/>
</dbReference>
<dbReference type="GO" id="GO:0045069">
    <property type="term" value="P:regulation of viral genome replication"/>
    <property type="evidence" value="ECO:0000250"/>
    <property type="project" value="UniProtKB"/>
</dbReference>
<dbReference type="CDD" id="cd01926">
    <property type="entry name" value="cyclophilin_ABH_like"/>
    <property type="match status" value="1"/>
</dbReference>
<dbReference type="FunFam" id="2.40.100.10:FF:000011">
    <property type="entry name" value="Peptidyl-prolyl cis-trans isomerase A"/>
    <property type="match status" value="1"/>
</dbReference>
<dbReference type="Gene3D" id="2.40.100.10">
    <property type="entry name" value="Cyclophilin-like"/>
    <property type="match status" value="1"/>
</dbReference>
<dbReference type="InterPro" id="IPR029000">
    <property type="entry name" value="Cyclophilin-like_dom_sf"/>
</dbReference>
<dbReference type="InterPro" id="IPR024936">
    <property type="entry name" value="Cyclophilin-type_PPIase"/>
</dbReference>
<dbReference type="InterPro" id="IPR020892">
    <property type="entry name" value="Cyclophilin-type_PPIase_CS"/>
</dbReference>
<dbReference type="InterPro" id="IPR002130">
    <property type="entry name" value="Cyclophilin-type_PPIase_dom"/>
</dbReference>
<dbReference type="PANTHER" id="PTHR11071">
    <property type="entry name" value="PEPTIDYL-PROLYL CIS-TRANS ISOMERASE"/>
    <property type="match status" value="1"/>
</dbReference>
<dbReference type="PANTHER" id="PTHR11071:SF490">
    <property type="entry name" value="PEPTIDYL-PROLYL CIS-TRANS ISOMERASE A"/>
    <property type="match status" value="1"/>
</dbReference>
<dbReference type="Pfam" id="PF00160">
    <property type="entry name" value="Pro_isomerase"/>
    <property type="match status" value="1"/>
</dbReference>
<dbReference type="PIRSF" id="PIRSF001467">
    <property type="entry name" value="Peptidylpro_ismrse"/>
    <property type="match status" value="1"/>
</dbReference>
<dbReference type="PRINTS" id="PR00153">
    <property type="entry name" value="CSAPPISMRASE"/>
</dbReference>
<dbReference type="SUPFAM" id="SSF50891">
    <property type="entry name" value="Cyclophilin-like"/>
    <property type="match status" value="1"/>
</dbReference>
<dbReference type="PROSITE" id="PS00170">
    <property type="entry name" value="CSA_PPIASE_1"/>
    <property type="match status" value="1"/>
</dbReference>
<dbReference type="PROSITE" id="PS50072">
    <property type="entry name" value="CSA_PPIASE_2"/>
    <property type="match status" value="1"/>
</dbReference>
<name>PPIA_PAPAN</name>
<comment type="function">
    <text evidence="1 2">Catalyzes the cis-trans isomerization of proline imidic peptide bonds in oligopeptides (By similarity). Exerts a strong chemotactic effect on leukocytes partly through activation of one of its membrane receptors BSG/CD147, initiating a signaling cascade that culminates in MAPK/ERK activation (By similarity). Activates endothelial cells (ECs) in a proinflammatory manner by stimulating activation of NF-kappa-B and ERK, JNK and p38 MAP-kinases and by inducing expression of adhesion molecules including SELE and VCAM1 (By similarity). Induces apoptosis in ECs by promoting the FOXO1-dependent expression of CCL2 and BCL2L11 which are involved in EC chemotaxis and apoptosis (By similarity). In response to oxidative stress, initiates proapoptotic and antiapoptotic signaling in ECs via activation of NF-kappa-B and AKT1 and up-regulation of antiapoptotic protein BCL2 (By similarity). Negatively regulates MAP3K5/ASK1 kinase activity, autophosphorylation and oxidative stress-induced apoptosis mediated by MAP3K5/ASK1 (By similarity). Necessary for the assembly of TARDBP in heterogeneous nuclear ribonucleoprotein (hnRNP) complexes and regulates TARDBP binding to RNA UG repeats and TARDBP-dependent expression of HDAC6, ATG7 and VCP which are involved in clearance of protein aggregates (By similarity). Plays an important role in platelet activation and aggregation (By similarity). Regulates calcium mobilization and integrin ITGA2B:ITGB3 bidirectional signaling via increased ROS production as well as by facilitating the interaction between integrin and the cell cytoskeleton (By similarity). Binds heparan sulfate glycosaminoglycans (By similarity).</text>
</comment>
<comment type="catalytic activity">
    <reaction evidence="2">
        <text>[protein]-peptidylproline (omega=180) = [protein]-peptidylproline (omega=0)</text>
        <dbReference type="Rhea" id="RHEA:16237"/>
        <dbReference type="Rhea" id="RHEA-COMP:10747"/>
        <dbReference type="Rhea" id="RHEA-COMP:10748"/>
        <dbReference type="ChEBI" id="CHEBI:83833"/>
        <dbReference type="ChEBI" id="CHEBI:83834"/>
        <dbReference type="EC" id="5.2.1.8"/>
    </reaction>
</comment>
<comment type="activity regulation">
    <text evidence="2">Binds cyclosporin A (CsA). CsA mediates some of its effects via an inhibitory action on PPIase.</text>
</comment>
<comment type="subunit">
    <text evidence="1 2">Interacts with protein phosphatase PPP3CA/calcineurin A (By similarity). Interacts with isoform 2 of BSG/CD147 (By similarity). Interacts with FOXO1; the interaction promotes FOXO1 dephosphorylation, nuclear accumulation and transcriptional activity (By similarity). Interacts with integrin ITGA2B:ITGB3; the interaction is ROS and peptidyl-prolyl cis-trans isomerase (PPIase) activity-dependent and is increased in the presence of thrombin (By similarity). Interacts with MAP3K5 (By similarity). Interacts with TARDBP; the interaction is dependent on the RNA-binding activity of TARDBP and the PPIase activity of PPIA/CYPA and the acetylation of PPIA/CYPA at Lys-125 favors the interaction (By similarity). Interacts with HNRNPA1, HNRNPA2B1, HNRNPC, RBMX, HNRNPK and HNRNPM (By similarity).</text>
</comment>
<comment type="subcellular location">
    <subcellularLocation>
        <location evidence="2">Cytoplasm</location>
    </subcellularLocation>
    <subcellularLocation>
        <location evidence="2">Secreted</location>
    </subcellularLocation>
    <subcellularLocation>
        <location evidence="2">Nucleus</location>
    </subcellularLocation>
    <text evidence="2">Secretion occurs in response to oxidative stress in vascular smooth muscle through a vesicular secretory pathway that involves actin remodeling and myosin II activation, and mediates ERK1/2 activation.</text>
</comment>
<comment type="PTM">
    <text evidence="2">Acetylation at Lys-125 markedly inhibits catalysis of cis to trans isomerization (By similarity). PPIA acetylation also antagonizes the immunosuppressive effects of cyclosporine by inhibiting the sequential steps of cyclosporine binding and calcineurin inhibition (By similarity). Acetylation at Lys-125 favors the interaction with TARDBP (By similarity).</text>
</comment>
<comment type="similarity">
    <text evidence="5">Belongs to the cyclophilin-type PPIase family. PPIase A subfamily.</text>
</comment>
<protein>
    <recommendedName>
        <fullName>Peptidyl-prolyl cis-trans isomerase A</fullName>
        <shortName>PPIase A</shortName>
        <ecNumber evidence="2">5.2.1.8</ecNumber>
    </recommendedName>
    <alternativeName>
        <fullName>Cyclophilin A</fullName>
    </alternativeName>
    <alternativeName>
        <fullName>Cyclosporin A-binding protein</fullName>
    </alternativeName>
    <alternativeName>
        <fullName>Rotamase A</fullName>
    </alternativeName>
    <component>
        <recommendedName>
            <fullName>Peptidyl-prolyl cis-trans isomerase A, N-terminally processed</fullName>
        </recommendedName>
    </component>
</protein>
<evidence type="ECO:0000250" key="1">
    <source>
        <dbReference type="UniProtKB" id="P17742"/>
    </source>
</evidence>
<evidence type="ECO:0000250" key="2">
    <source>
        <dbReference type="UniProtKB" id="P62937"/>
    </source>
</evidence>
<evidence type="ECO:0000255" key="3"/>
<evidence type="ECO:0000255" key="4">
    <source>
        <dbReference type="PROSITE-ProRule" id="PRU00156"/>
    </source>
</evidence>
<evidence type="ECO:0000305" key="5"/>
<proteinExistence type="evidence at transcript level"/>
<accession>P62941</accession>
<accession>P05092</accession>
<accession>Q96IX3</accession>
<accession>Q9BRU4</accession>
<accession>Q9BTY9</accession>
<accession>Q9UC61</accession>
<gene>
    <name type="primary">PPIA</name>
    <name type="synonym">CYPA</name>
</gene>
<keyword id="KW-0007">Acetylation</keyword>
<keyword id="KW-0053">Apoptosis</keyword>
<keyword id="KW-0963">Cytoplasm</keyword>
<keyword id="KW-0325">Glycoprotein</keyword>
<keyword id="KW-0413">Isomerase</keyword>
<keyword id="KW-1017">Isopeptide bond</keyword>
<keyword id="KW-0539">Nucleus</keyword>
<keyword id="KW-0597">Phosphoprotein</keyword>
<keyword id="KW-1185">Reference proteome</keyword>
<keyword id="KW-0697">Rotamase</keyword>
<keyword id="KW-0964">Secreted</keyword>
<keyword id="KW-0832">Ubl conjugation</keyword>
<reference key="1">
    <citation type="submission" date="1997-09" db="EMBL/GenBank/DDBJ databases">
        <authorList>
            <person name="Luban J."/>
            <person name="Yin L."/>
        </authorList>
    </citation>
    <scope>NUCLEOTIDE SEQUENCE [MRNA]</scope>
</reference>